<comment type="function">
    <text>Acts as a downstream effector for the regulation of actin polymerization by Cdc42.</text>
</comment>
<comment type="catalytic activity">
    <reaction evidence="12">
        <text>L-seryl-[protein] + ATP = O-phospho-L-seryl-[protein] + ADP + H(+)</text>
        <dbReference type="Rhea" id="RHEA:17989"/>
        <dbReference type="Rhea" id="RHEA-COMP:9863"/>
        <dbReference type="Rhea" id="RHEA-COMP:11604"/>
        <dbReference type="ChEBI" id="CHEBI:15378"/>
        <dbReference type="ChEBI" id="CHEBI:29999"/>
        <dbReference type="ChEBI" id="CHEBI:30616"/>
        <dbReference type="ChEBI" id="CHEBI:83421"/>
        <dbReference type="ChEBI" id="CHEBI:456216"/>
        <dbReference type="EC" id="2.7.11.1"/>
    </reaction>
</comment>
<comment type="catalytic activity">
    <reaction evidence="12">
        <text>L-threonyl-[protein] + ATP = O-phospho-L-threonyl-[protein] + ADP + H(+)</text>
        <dbReference type="Rhea" id="RHEA:46608"/>
        <dbReference type="Rhea" id="RHEA-COMP:11060"/>
        <dbReference type="Rhea" id="RHEA-COMP:11605"/>
        <dbReference type="ChEBI" id="CHEBI:15378"/>
        <dbReference type="ChEBI" id="CHEBI:30013"/>
        <dbReference type="ChEBI" id="CHEBI:30616"/>
        <dbReference type="ChEBI" id="CHEBI:61977"/>
        <dbReference type="ChEBI" id="CHEBI:456216"/>
        <dbReference type="EC" id="2.7.11.1"/>
    </reaction>
</comment>
<comment type="subunit">
    <text evidence="12">Interacts tightly with GTP-bound but not GDP-bound Cdc42.</text>
</comment>
<comment type="disruption phenotype">
    <text evidence="12">Flies are defective in producing fertilized eggs. Egg chambers exhibit abnormal accumulation of F-actin.</text>
</comment>
<comment type="similarity">
    <text evidence="13">Belongs to the protein kinase superfamily. AGC Ser/Thr protein kinase family. DMPK subfamily.</text>
</comment>
<comment type="sequence caution" evidence="13">
    <conflict type="frameshift">
        <sequence resource="EMBL-CDS" id="AAB96643"/>
    </conflict>
</comment>
<accession>Q9W1B0</accession>
<accession>O44368</accession>
<evidence type="ECO:0000255" key="1"/>
<evidence type="ECO:0000255" key="2">
    <source>
        <dbReference type="PROSITE-ProRule" id="PRU00057"/>
    </source>
</evidence>
<evidence type="ECO:0000255" key="3">
    <source>
        <dbReference type="PROSITE-ProRule" id="PRU00145"/>
    </source>
</evidence>
<evidence type="ECO:0000255" key="4">
    <source>
        <dbReference type="PROSITE-ProRule" id="PRU00159"/>
    </source>
</evidence>
<evidence type="ECO:0000255" key="5">
    <source>
        <dbReference type="PROSITE-ProRule" id="PRU00226"/>
    </source>
</evidence>
<evidence type="ECO:0000255" key="6">
    <source>
        <dbReference type="PROSITE-ProRule" id="PRU00618"/>
    </source>
</evidence>
<evidence type="ECO:0000255" key="7">
    <source>
        <dbReference type="PROSITE-ProRule" id="PRU00795"/>
    </source>
</evidence>
<evidence type="ECO:0000255" key="8">
    <source>
        <dbReference type="PROSITE-ProRule" id="PRU10027"/>
    </source>
</evidence>
<evidence type="ECO:0000256" key="9">
    <source>
        <dbReference type="SAM" id="MobiDB-lite"/>
    </source>
</evidence>
<evidence type="ECO:0000269" key="10">
    <source>
    </source>
</evidence>
<evidence type="ECO:0000269" key="11">
    <source>
    </source>
</evidence>
<evidence type="ECO:0000269" key="12">
    <source>
    </source>
</evidence>
<evidence type="ECO:0000305" key="13"/>
<sequence>MEYESSEISDITTGSCKKRLTFLKCILSDTTSDQKWAAEFGEDTEGHQFSLDYLLDTFIVLYDECSNSSLRREKGVSDFLKLSKPFVHIVRKLRLSRDDFDILKIIGRGAFGEVCVVQMISTEKVYAMKILNKWEMLKRAETACFREERDVLVFGDRQWITNLHYAFQDNINLYLVMDYYCGGDLLTLLSKFEDKLPEDMAKFYITEMILAINSIHQIRYVHRDIKPDNVLLDKRGHVRLADFGSCLRLDKDGTVQSNVAVGTPDYISPEILRAMEDGKGRYGTECDWWSLGVCMYEMLYGETPFYAESLVETYGKIMNHQNCFNLPSQETLNYKVSETSQDLLCKLICIPENRLGQNGIQDFMDHPWFVGIDWKNIRQGPAPYVPEVSSPTDTSNFDVDDNDVRLTDSIPPSANPAFSGFHLPFIGFTFSLTSSSTLDSKKNQSSGFGDDTLDTISSPQLAILPSNNSETPVDSVQLKALNDQLAALKQEKAELSKQHNEVFERLKTQDSELQDAISQRNIAMMEYSEVTEKLSELRNQKQKLSRQVRDKEEELDGAMQKNDSLRNELRKSDKTRRELELHIEDAVIEAAKEKKLREHAEDCCRQLQMELRKGSSSVETTMPLSISSEMSSYEIERLELQFSEKLSHQQTRHNMELEALREQFSELENANLALTKELQQTQERLKYTQMESITDSAETLLELKKQHDLEKSSWFEEKQRLSSEVNLKSKSLKELQAEDDEIFKELRMKREAITLWERQMAEIIQWVSDEKDARGYLQALATKMTEELEYLKHVGTFNNNGVDNKNWRNRRSQKLDKMELLNLQSALQREIQAKNMISDELSQTRSDLISTQKEVRDYKKRYDSILHDFQKKETELRDLQKGGLEYSESFLNKSTHHGLSSAFFRDMSKNSEIIDSAESFGNESGDNFTPNFFQSGNSGMLFNYEPKYAGKNNKDHSSMKEASVSDLSREESDQLVKESQKKVPGNTAIHQFLVRTFSSPTKCNHCTSLMVGLTRQGVVCEICGFACHTICCQKVPTTCPVPMDQTKRPLGIDPTRGIGTAYEGYVKVPKSGVIKRGWIRQFVVVCDFKLFLYDISPDRCALPSVSVSQVLDMRDPEFSVGSVRESDVIHAAKKDVPCIFKIKTALIDGGLSLNTLMLADNESEKSKWVIALGELHRILKRNSLPNTAIFKVNEILDNTLSLIRNALCSVIIYPNQILLGTEDGLFYINLDQYEIARIGESKKILQLWYIEEEQILVILCGKQRNLRLLPIRALEASDVEWIKVVESKNCISACTGIIRRFPNIVYSFIIALKRPNNHTQIVVYEINRTRTRHQKTCEFTIGYMAQHLQILSDMRLVVAHQSGFTAYFLRGEATAMSLVHPENQLCAFLNYSGVDAVRVIEILCPSGGNFGEYLLVFQTLAIYVDLQGRKSRDREIMYPAFPTYITFCDGHLLVFSDTHLDIFNTQTAEWVQSIGLKQSLPLNNLGNVVLSSVNDTPLIVYLSNIHTKGLLQYRDGNRKGLPSIKRRFSIREINKTIKSDRRSKMISAPTNFNHISHMGPGDGIQNQRLLDLPTTLETADQACSPIIHSLSCIPQSRKSNFLEQVDANSDDYGNDNIISRTPSPMASSFMDGLSNND</sequence>
<dbReference type="EC" id="2.7.11.1"/>
<dbReference type="EMBL" id="AF029395">
    <property type="protein sequence ID" value="AAB96643.1"/>
    <property type="status" value="ALT_FRAME"/>
    <property type="molecule type" value="mRNA"/>
</dbReference>
<dbReference type="EMBL" id="AE013599">
    <property type="protein sequence ID" value="AAF47163.1"/>
    <property type="molecule type" value="Genomic_DNA"/>
</dbReference>
<dbReference type="EMBL" id="AY051698">
    <property type="protein sequence ID" value="AAK93122.1"/>
    <property type="molecule type" value="mRNA"/>
</dbReference>
<dbReference type="RefSeq" id="NP_523837.2">
    <property type="nucleotide sequence ID" value="NM_079113.3"/>
</dbReference>
<dbReference type="SMR" id="Q9W1B0"/>
<dbReference type="BioGRID" id="63437">
    <property type="interactions" value="2"/>
</dbReference>
<dbReference type="FunCoup" id="Q9W1B0">
    <property type="interactions" value="730"/>
</dbReference>
<dbReference type="STRING" id="7227.FBpp0072194"/>
<dbReference type="iPTMnet" id="Q9W1B0"/>
<dbReference type="PaxDb" id="7227-FBpp0072194"/>
<dbReference type="DNASU" id="37858"/>
<dbReference type="EnsemblMetazoa" id="FBtr0072287">
    <property type="protein sequence ID" value="FBpp0072194"/>
    <property type="gene ID" value="FBgn0023081"/>
</dbReference>
<dbReference type="GeneID" id="37858"/>
<dbReference type="KEGG" id="dme:Dmel_CG4012"/>
<dbReference type="UCSC" id="CG4012-RA">
    <property type="organism name" value="d. melanogaster"/>
</dbReference>
<dbReference type="AGR" id="FB:FBgn0023081"/>
<dbReference type="CTD" id="37858"/>
<dbReference type="FlyBase" id="FBgn0023081">
    <property type="gene designation" value="gek"/>
</dbReference>
<dbReference type="VEuPathDB" id="VectorBase:FBgn0023081"/>
<dbReference type="eggNOG" id="KOG0612">
    <property type="taxonomic scope" value="Eukaryota"/>
</dbReference>
<dbReference type="GeneTree" id="ENSGT01030000234517"/>
<dbReference type="HOGENOM" id="CLU_000288_140_3_1"/>
<dbReference type="InParanoid" id="Q9W1B0"/>
<dbReference type="OMA" id="CCDKVPP"/>
<dbReference type="OrthoDB" id="6764942at2759"/>
<dbReference type="PhylomeDB" id="Q9W1B0"/>
<dbReference type="Reactome" id="R-DME-9013149">
    <property type="pathway name" value="RAC1 GTPase cycle"/>
</dbReference>
<dbReference type="Reactome" id="R-DME-9013406">
    <property type="pathway name" value="RHOQ GTPase cycle"/>
</dbReference>
<dbReference type="SignaLink" id="Q9W1B0"/>
<dbReference type="BioGRID-ORCS" id="37858">
    <property type="hits" value="0 hits in 3 CRISPR screens"/>
</dbReference>
<dbReference type="GenomeRNAi" id="37858"/>
<dbReference type="PRO" id="PR:Q9W1B0"/>
<dbReference type="Proteomes" id="UP000000803">
    <property type="component" value="Chromosome 2R"/>
</dbReference>
<dbReference type="Bgee" id="FBgn0023081">
    <property type="expression patterns" value="Expressed in oviduct (Drosophila) and 104 other cell types or tissues"/>
</dbReference>
<dbReference type="GO" id="GO:0030424">
    <property type="term" value="C:axon"/>
    <property type="evidence" value="ECO:0000314"/>
    <property type="project" value="FlyBase"/>
</dbReference>
<dbReference type="GO" id="GO:0005737">
    <property type="term" value="C:cytoplasm"/>
    <property type="evidence" value="ECO:0000318"/>
    <property type="project" value="GO_Central"/>
</dbReference>
<dbReference type="GO" id="GO:0005856">
    <property type="term" value="C:cytoskeleton"/>
    <property type="evidence" value="ECO:0000318"/>
    <property type="project" value="GO_Central"/>
</dbReference>
<dbReference type="GO" id="GO:0030426">
    <property type="term" value="C:growth cone"/>
    <property type="evidence" value="ECO:0000314"/>
    <property type="project" value="FlyBase"/>
</dbReference>
<dbReference type="GO" id="GO:0005524">
    <property type="term" value="F:ATP binding"/>
    <property type="evidence" value="ECO:0007669"/>
    <property type="project" value="UniProtKB-KW"/>
</dbReference>
<dbReference type="GO" id="GO:0004672">
    <property type="term" value="F:protein kinase activity"/>
    <property type="evidence" value="ECO:0000314"/>
    <property type="project" value="FlyBase"/>
</dbReference>
<dbReference type="GO" id="GO:0106310">
    <property type="term" value="F:protein serine kinase activity"/>
    <property type="evidence" value="ECO:0007669"/>
    <property type="project" value="RHEA"/>
</dbReference>
<dbReference type="GO" id="GO:0004674">
    <property type="term" value="F:protein serine/threonine kinase activity"/>
    <property type="evidence" value="ECO:0000314"/>
    <property type="project" value="UniProtKB"/>
</dbReference>
<dbReference type="GO" id="GO:0008270">
    <property type="term" value="F:zinc ion binding"/>
    <property type="evidence" value="ECO:0007669"/>
    <property type="project" value="UniProtKB-KW"/>
</dbReference>
<dbReference type="GO" id="GO:0008154">
    <property type="term" value="P:actin polymerization or depolymerization"/>
    <property type="evidence" value="ECO:0000315"/>
    <property type="project" value="FlyBase"/>
</dbReference>
<dbReference type="GO" id="GO:0031032">
    <property type="term" value="P:actomyosin structure organization"/>
    <property type="evidence" value="ECO:0000318"/>
    <property type="project" value="GO_Central"/>
</dbReference>
<dbReference type="GO" id="GO:0030833">
    <property type="term" value="P:regulation of actin filament polymerization"/>
    <property type="evidence" value="ECO:0000315"/>
    <property type="project" value="UniProtKB"/>
</dbReference>
<dbReference type="GO" id="GO:0008039">
    <property type="term" value="P:synaptic target recognition"/>
    <property type="evidence" value="ECO:0000315"/>
    <property type="project" value="FlyBase"/>
</dbReference>
<dbReference type="CDD" id="cd20809">
    <property type="entry name" value="C1_MRCK"/>
    <property type="match status" value="1"/>
</dbReference>
<dbReference type="CDD" id="cd00132">
    <property type="entry name" value="CRIB"/>
    <property type="match status" value="1"/>
</dbReference>
<dbReference type="CDD" id="cd01243">
    <property type="entry name" value="PH_MRCK"/>
    <property type="match status" value="1"/>
</dbReference>
<dbReference type="CDD" id="cd05597">
    <property type="entry name" value="STKc_DMPK_like"/>
    <property type="match status" value="1"/>
</dbReference>
<dbReference type="FunFam" id="1.10.510.10:FF:000014">
    <property type="entry name" value="Non-specific serine/threonine protein kinase"/>
    <property type="match status" value="1"/>
</dbReference>
<dbReference type="FunFam" id="2.30.29.30:FF:000032">
    <property type="entry name" value="Non-specific serine/threonine protein kinase"/>
    <property type="match status" value="1"/>
</dbReference>
<dbReference type="FunFam" id="3.30.60.20:FF:000005">
    <property type="entry name" value="Non-specific serine/threonine protein kinase"/>
    <property type="match status" value="1"/>
</dbReference>
<dbReference type="FunFam" id="3.30.200.20:FF:001055">
    <property type="entry name" value="Serine/threonine-protein kinase MRCK beta"/>
    <property type="match status" value="1"/>
</dbReference>
<dbReference type="Gene3D" id="1.20.5.340">
    <property type="match status" value="1"/>
</dbReference>
<dbReference type="Gene3D" id="3.30.60.20">
    <property type="match status" value="1"/>
</dbReference>
<dbReference type="Gene3D" id="3.30.200.20">
    <property type="entry name" value="Phosphorylase Kinase, domain 1"/>
    <property type="match status" value="1"/>
</dbReference>
<dbReference type="Gene3D" id="2.30.29.30">
    <property type="entry name" value="Pleckstrin-homology domain (PH domain)/Phosphotyrosine-binding domain (PTB)"/>
    <property type="match status" value="1"/>
</dbReference>
<dbReference type="Gene3D" id="1.10.510.10">
    <property type="entry name" value="Transferase(Phosphotransferase) domain 1"/>
    <property type="match status" value="1"/>
</dbReference>
<dbReference type="InterPro" id="IPR000961">
    <property type="entry name" value="AGC-kinase_C"/>
</dbReference>
<dbReference type="InterPro" id="IPR046349">
    <property type="entry name" value="C1-like_sf"/>
</dbReference>
<dbReference type="InterPro" id="IPR001180">
    <property type="entry name" value="CNH_dom"/>
</dbReference>
<dbReference type="InterPro" id="IPR000095">
    <property type="entry name" value="CRIB_dom"/>
</dbReference>
<dbReference type="InterPro" id="IPR031597">
    <property type="entry name" value="KELK"/>
</dbReference>
<dbReference type="InterPro" id="IPR011009">
    <property type="entry name" value="Kinase-like_dom_sf"/>
</dbReference>
<dbReference type="InterPro" id="IPR002219">
    <property type="entry name" value="PE/DAG-bd"/>
</dbReference>
<dbReference type="InterPro" id="IPR011993">
    <property type="entry name" value="PH-like_dom_sf"/>
</dbReference>
<dbReference type="InterPro" id="IPR001849">
    <property type="entry name" value="PH_domain"/>
</dbReference>
<dbReference type="InterPro" id="IPR017892">
    <property type="entry name" value="Pkinase_C"/>
</dbReference>
<dbReference type="InterPro" id="IPR000719">
    <property type="entry name" value="Prot_kinase_dom"/>
</dbReference>
<dbReference type="InterPro" id="IPR017441">
    <property type="entry name" value="Protein_kinase_ATP_BS"/>
</dbReference>
<dbReference type="InterPro" id="IPR050839">
    <property type="entry name" value="Rho-assoc_Ser/Thr_Kinase"/>
</dbReference>
<dbReference type="InterPro" id="IPR008271">
    <property type="entry name" value="Ser/Thr_kinase_AS"/>
</dbReference>
<dbReference type="PANTHER" id="PTHR22988">
    <property type="entry name" value="MYOTONIC DYSTROPHY S/T KINASE-RELATED"/>
    <property type="match status" value="1"/>
</dbReference>
<dbReference type="PANTHER" id="PTHR22988:SF66">
    <property type="entry name" value="SERINE_THREONINE-PROTEIN KINASE GENGHIS KHAN"/>
    <property type="match status" value="1"/>
</dbReference>
<dbReference type="Pfam" id="PF00130">
    <property type="entry name" value="C1_1"/>
    <property type="match status" value="1"/>
</dbReference>
<dbReference type="Pfam" id="PF00780">
    <property type="entry name" value="CNH"/>
    <property type="match status" value="1"/>
</dbReference>
<dbReference type="Pfam" id="PF15796">
    <property type="entry name" value="KELK"/>
    <property type="match status" value="1"/>
</dbReference>
<dbReference type="Pfam" id="PF25346">
    <property type="entry name" value="PH_MRCK"/>
    <property type="match status" value="1"/>
</dbReference>
<dbReference type="Pfam" id="PF00069">
    <property type="entry name" value="Pkinase"/>
    <property type="match status" value="1"/>
</dbReference>
<dbReference type="Pfam" id="PF00433">
    <property type="entry name" value="Pkinase_C"/>
    <property type="match status" value="1"/>
</dbReference>
<dbReference type="SMART" id="SM00109">
    <property type="entry name" value="C1"/>
    <property type="match status" value="1"/>
</dbReference>
<dbReference type="SMART" id="SM00036">
    <property type="entry name" value="CNH"/>
    <property type="match status" value="1"/>
</dbReference>
<dbReference type="SMART" id="SM00285">
    <property type="entry name" value="PBD"/>
    <property type="match status" value="1"/>
</dbReference>
<dbReference type="SMART" id="SM00233">
    <property type="entry name" value="PH"/>
    <property type="match status" value="1"/>
</dbReference>
<dbReference type="SMART" id="SM00133">
    <property type="entry name" value="S_TK_X"/>
    <property type="match status" value="1"/>
</dbReference>
<dbReference type="SMART" id="SM00220">
    <property type="entry name" value="S_TKc"/>
    <property type="match status" value="1"/>
</dbReference>
<dbReference type="SUPFAM" id="SSF57889">
    <property type="entry name" value="Cysteine-rich domain"/>
    <property type="match status" value="1"/>
</dbReference>
<dbReference type="SUPFAM" id="SSF50729">
    <property type="entry name" value="PH domain-like"/>
    <property type="match status" value="1"/>
</dbReference>
<dbReference type="SUPFAM" id="SSF56112">
    <property type="entry name" value="Protein kinase-like (PK-like)"/>
    <property type="match status" value="1"/>
</dbReference>
<dbReference type="PROSITE" id="PS51285">
    <property type="entry name" value="AGC_KINASE_CTER"/>
    <property type="match status" value="1"/>
</dbReference>
<dbReference type="PROSITE" id="PS50219">
    <property type="entry name" value="CNH"/>
    <property type="match status" value="1"/>
</dbReference>
<dbReference type="PROSITE" id="PS50108">
    <property type="entry name" value="CRIB"/>
    <property type="match status" value="1"/>
</dbReference>
<dbReference type="PROSITE" id="PS50003">
    <property type="entry name" value="PH_DOMAIN"/>
    <property type="match status" value="1"/>
</dbReference>
<dbReference type="PROSITE" id="PS00107">
    <property type="entry name" value="PROTEIN_KINASE_ATP"/>
    <property type="match status" value="1"/>
</dbReference>
<dbReference type="PROSITE" id="PS50011">
    <property type="entry name" value="PROTEIN_KINASE_DOM"/>
    <property type="match status" value="1"/>
</dbReference>
<dbReference type="PROSITE" id="PS00108">
    <property type="entry name" value="PROTEIN_KINASE_ST"/>
    <property type="match status" value="1"/>
</dbReference>
<dbReference type="PROSITE" id="PS00479">
    <property type="entry name" value="ZF_DAG_PE_1"/>
    <property type="match status" value="1"/>
</dbReference>
<dbReference type="PROSITE" id="PS50081">
    <property type="entry name" value="ZF_DAG_PE_2"/>
    <property type="match status" value="1"/>
</dbReference>
<organism>
    <name type="scientific">Drosophila melanogaster</name>
    <name type="common">Fruit fly</name>
    <dbReference type="NCBI Taxonomy" id="7227"/>
    <lineage>
        <taxon>Eukaryota</taxon>
        <taxon>Metazoa</taxon>
        <taxon>Ecdysozoa</taxon>
        <taxon>Arthropoda</taxon>
        <taxon>Hexapoda</taxon>
        <taxon>Insecta</taxon>
        <taxon>Pterygota</taxon>
        <taxon>Neoptera</taxon>
        <taxon>Endopterygota</taxon>
        <taxon>Diptera</taxon>
        <taxon>Brachycera</taxon>
        <taxon>Muscomorpha</taxon>
        <taxon>Ephydroidea</taxon>
        <taxon>Drosophilidae</taxon>
        <taxon>Drosophila</taxon>
        <taxon>Sophophora</taxon>
    </lineage>
</organism>
<feature type="chain" id="PRO_0000348214" description="Serine/threonine-protein kinase Genghis Khan">
    <location>
        <begin position="1"/>
        <end position="1637"/>
    </location>
</feature>
<feature type="domain" description="Protein kinase" evidence="4">
    <location>
        <begin position="100"/>
        <end position="369"/>
    </location>
</feature>
<feature type="domain" description="AGC-kinase C-terminal" evidence="6">
    <location>
        <begin position="370"/>
        <end position="440"/>
    </location>
</feature>
<feature type="domain" description="PH" evidence="3">
    <location>
        <begin position="1059"/>
        <end position="1177"/>
    </location>
</feature>
<feature type="domain" description="CNH" evidence="7">
    <location>
        <begin position="1203"/>
        <end position="1489"/>
    </location>
</feature>
<feature type="domain" description="CRIB" evidence="2">
    <location>
        <begin position="1546"/>
        <end position="1559"/>
    </location>
</feature>
<feature type="zinc finger region" description="Phorbol-ester/DAG-type" evidence="5">
    <location>
        <begin position="989"/>
        <end position="1039"/>
    </location>
</feature>
<feature type="region of interest" description="Disordered" evidence="9">
    <location>
        <begin position="538"/>
        <end position="575"/>
    </location>
</feature>
<feature type="region of interest" description="Disordered" evidence="9">
    <location>
        <begin position="952"/>
        <end position="971"/>
    </location>
</feature>
<feature type="region of interest" description="Disordered" evidence="9">
    <location>
        <begin position="1611"/>
        <end position="1637"/>
    </location>
</feature>
<feature type="coiled-coil region" evidence="1">
    <location>
        <begin position="473"/>
        <end position="587"/>
    </location>
</feature>
<feature type="coiled-coil region" evidence="1">
    <location>
        <begin position="643"/>
        <end position="688"/>
    </location>
</feature>
<feature type="coiled-coil region" evidence="1">
    <location>
        <begin position="839"/>
        <end position="881"/>
    </location>
</feature>
<feature type="compositionally biased region" description="Basic and acidic residues" evidence="9">
    <location>
        <begin position="563"/>
        <end position="575"/>
    </location>
</feature>
<feature type="compositionally biased region" description="Polar residues" evidence="9">
    <location>
        <begin position="1616"/>
        <end position="1626"/>
    </location>
</feature>
<feature type="active site" description="Proton acceptor" evidence="4 8">
    <location>
        <position position="224"/>
    </location>
</feature>
<feature type="binding site" evidence="4">
    <location>
        <begin position="106"/>
        <end position="114"/>
    </location>
    <ligand>
        <name>ATP</name>
        <dbReference type="ChEBI" id="CHEBI:30616"/>
    </ligand>
</feature>
<feature type="binding site" evidence="4">
    <location>
        <position position="129"/>
    </location>
    <ligand>
        <name>ATP</name>
        <dbReference type="ChEBI" id="CHEBI:30616"/>
    </ligand>
</feature>
<feature type="modified residue" description="Phosphothreonine" evidence="11">
    <location>
        <position position="895"/>
    </location>
</feature>
<feature type="modified residue" description="Phosphoserine" evidence="10">
    <location>
        <position position="1584"/>
    </location>
</feature>
<feature type="mutagenesis site" description="Abolishes interaction with Cdc42.">
    <location>
        <begin position="1546"/>
        <end position="1549"/>
    </location>
</feature>
<feature type="sequence conflict" description="In Ref. 1; AAB96643." evidence="13" ref="1">
    <original>G</original>
    <variation>D</variation>
    <location>
        <position position="41"/>
    </location>
</feature>
<feature type="sequence conflict" description="In Ref. 1; AAB96643." evidence="13" ref="1">
    <original>LQ</original>
    <variation>FE</variation>
    <location>
        <begin position="879"/>
        <end position="880"/>
    </location>
</feature>
<feature type="sequence conflict" description="In Ref. 1; AAB96643." evidence="13" ref="1">
    <original>R</original>
    <variation>G</variation>
    <location>
        <position position="1300"/>
    </location>
</feature>
<keyword id="KW-0067">ATP-binding</keyword>
<keyword id="KW-0175">Coiled coil</keyword>
<keyword id="KW-0418">Kinase</keyword>
<keyword id="KW-0479">Metal-binding</keyword>
<keyword id="KW-0547">Nucleotide-binding</keyword>
<keyword id="KW-0597">Phosphoprotein</keyword>
<keyword id="KW-1185">Reference proteome</keyword>
<keyword id="KW-0723">Serine/threonine-protein kinase</keyword>
<keyword id="KW-0808">Transferase</keyword>
<keyword id="KW-0862">Zinc</keyword>
<keyword id="KW-0863">Zinc-finger</keyword>
<protein>
    <recommendedName>
        <fullName>Serine/threonine-protein kinase Genghis Khan</fullName>
        <ecNumber>2.7.11.1</ecNumber>
    </recommendedName>
</protein>
<gene>
    <name type="primary">gek</name>
    <name type="ORF">CG4012</name>
</gene>
<name>GEK_DROME</name>
<reference key="1">
    <citation type="journal article" date="1997" name="Proc. Natl. Acad. Sci. U.S.A.">
        <title>Genghis Khan (Gek) as a putative effector for Drosophila Cdc42 and regulator of actin polymerization.</title>
        <authorList>
            <person name="Luo L."/>
            <person name="Lee T."/>
            <person name="Tsai L."/>
            <person name="Tang G."/>
            <person name="Jan L.Y."/>
            <person name="Jan Y.N."/>
        </authorList>
    </citation>
    <scope>NUCLEOTIDE SEQUENCE [MRNA]</scope>
    <scope>ENZYME ACTIVITY</scope>
    <scope>DISRUPTION PHENOTYPE</scope>
    <scope>INTERACTION WITH CDC42</scope>
    <scope>MUTAGENESIS OF 1546-ILE--PRO-1548</scope>
</reference>
<reference key="2">
    <citation type="journal article" date="2000" name="Science">
        <title>The genome sequence of Drosophila melanogaster.</title>
        <authorList>
            <person name="Adams M.D."/>
            <person name="Celniker S.E."/>
            <person name="Holt R.A."/>
            <person name="Evans C.A."/>
            <person name="Gocayne J.D."/>
            <person name="Amanatides P.G."/>
            <person name="Scherer S.E."/>
            <person name="Li P.W."/>
            <person name="Hoskins R.A."/>
            <person name="Galle R.F."/>
            <person name="George R.A."/>
            <person name="Lewis S.E."/>
            <person name="Richards S."/>
            <person name="Ashburner M."/>
            <person name="Henderson S.N."/>
            <person name="Sutton G.G."/>
            <person name="Wortman J.R."/>
            <person name="Yandell M.D."/>
            <person name="Zhang Q."/>
            <person name="Chen L.X."/>
            <person name="Brandon R.C."/>
            <person name="Rogers Y.-H.C."/>
            <person name="Blazej R.G."/>
            <person name="Champe M."/>
            <person name="Pfeiffer B.D."/>
            <person name="Wan K.H."/>
            <person name="Doyle C."/>
            <person name="Baxter E.G."/>
            <person name="Helt G."/>
            <person name="Nelson C.R."/>
            <person name="Miklos G.L.G."/>
            <person name="Abril J.F."/>
            <person name="Agbayani A."/>
            <person name="An H.-J."/>
            <person name="Andrews-Pfannkoch C."/>
            <person name="Baldwin D."/>
            <person name="Ballew R.M."/>
            <person name="Basu A."/>
            <person name="Baxendale J."/>
            <person name="Bayraktaroglu L."/>
            <person name="Beasley E.M."/>
            <person name="Beeson K.Y."/>
            <person name="Benos P.V."/>
            <person name="Berman B.P."/>
            <person name="Bhandari D."/>
            <person name="Bolshakov S."/>
            <person name="Borkova D."/>
            <person name="Botchan M.R."/>
            <person name="Bouck J."/>
            <person name="Brokstein P."/>
            <person name="Brottier P."/>
            <person name="Burtis K.C."/>
            <person name="Busam D.A."/>
            <person name="Butler H."/>
            <person name="Cadieu E."/>
            <person name="Center A."/>
            <person name="Chandra I."/>
            <person name="Cherry J.M."/>
            <person name="Cawley S."/>
            <person name="Dahlke C."/>
            <person name="Davenport L.B."/>
            <person name="Davies P."/>
            <person name="de Pablos B."/>
            <person name="Delcher A."/>
            <person name="Deng Z."/>
            <person name="Mays A.D."/>
            <person name="Dew I."/>
            <person name="Dietz S.M."/>
            <person name="Dodson K."/>
            <person name="Doup L.E."/>
            <person name="Downes M."/>
            <person name="Dugan-Rocha S."/>
            <person name="Dunkov B.C."/>
            <person name="Dunn P."/>
            <person name="Durbin K.J."/>
            <person name="Evangelista C.C."/>
            <person name="Ferraz C."/>
            <person name="Ferriera S."/>
            <person name="Fleischmann W."/>
            <person name="Fosler C."/>
            <person name="Gabrielian A.E."/>
            <person name="Garg N.S."/>
            <person name="Gelbart W.M."/>
            <person name="Glasser K."/>
            <person name="Glodek A."/>
            <person name="Gong F."/>
            <person name="Gorrell J.H."/>
            <person name="Gu Z."/>
            <person name="Guan P."/>
            <person name="Harris M."/>
            <person name="Harris N.L."/>
            <person name="Harvey D.A."/>
            <person name="Heiman T.J."/>
            <person name="Hernandez J.R."/>
            <person name="Houck J."/>
            <person name="Hostin D."/>
            <person name="Houston K.A."/>
            <person name="Howland T.J."/>
            <person name="Wei M.-H."/>
            <person name="Ibegwam C."/>
            <person name="Jalali M."/>
            <person name="Kalush F."/>
            <person name="Karpen G.H."/>
            <person name="Ke Z."/>
            <person name="Kennison J.A."/>
            <person name="Ketchum K.A."/>
            <person name="Kimmel B.E."/>
            <person name="Kodira C.D."/>
            <person name="Kraft C.L."/>
            <person name="Kravitz S."/>
            <person name="Kulp D."/>
            <person name="Lai Z."/>
            <person name="Lasko P."/>
            <person name="Lei Y."/>
            <person name="Levitsky A.A."/>
            <person name="Li J.H."/>
            <person name="Li Z."/>
            <person name="Liang Y."/>
            <person name="Lin X."/>
            <person name="Liu X."/>
            <person name="Mattei B."/>
            <person name="McIntosh T.C."/>
            <person name="McLeod M.P."/>
            <person name="McPherson D."/>
            <person name="Merkulov G."/>
            <person name="Milshina N.V."/>
            <person name="Mobarry C."/>
            <person name="Morris J."/>
            <person name="Moshrefi A."/>
            <person name="Mount S.M."/>
            <person name="Moy M."/>
            <person name="Murphy B."/>
            <person name="Murphy L."/>
            <person name="Muzny D.M."/>
            <person name="Nelson D.L."/>
            <person name="Nelson D.R."/>
            <person name="Nelson K.A."/>
            <person name="Nixon K."/>
            <person name="Nusskern D.R."/>
            <person name="Pacleb J.M."/>
            <person name="Palazzolo M."/>
            <person name="Pittman G.S."/>
            <person name="Pan S."/>
            <person name="Pollard J."/>
            <person name="Puri V."/>
            <person name="Reese M.G."/>
            <person name="Reinert K."/>
            <person name="Remington K."/>
            <person name="Saunders R.D.C."/>
            <person name="Scheeler F."/>
            <person name="Shen H."/>
            <person name="Shue B.C."/>
            <person name="Siden-Kiamos I."/>
            <person name="Simpson M."/>
            <person name="Skupski M.P."/>
            <person name="Smith T.J."/>
            <person name="Spier E."/>
            <person name="Spradling A.C."/>
            <person name="Stapleton M."/>
            <person name="Strong R."/>
            <person name="Sun E."/>
            <person name="Svirskas R."/>
            <person name="Tector C."/>
            <person name="Turner R."/>
            <person name="Venter E."/>
            <person name="Wang A.H."/>
            <person name="Wang X."/>
            <person name="Wang Z.-Y."/>
            <person name="Wassarman D.A."/>
            <person name="Weinstock G.M."/>
            <person name="Weissenbach J."/>
            <person name="Williams S.M."/>
            <person name="Woodage T."/>
            <person name="Worley K.C."/>
            <person name="Wu D."/>
            <person name="Yang S."/>
            <person name="Yao Q.A."/>
            <person name="Ye J."/>
            <person name="Yeh R.-F."/>
            <person name="Zaveri J.S."/>
            <person name="Zhan M."/>
            <person name="Zhang G."/>
            <person name="Zhao Q."/>
            <person name="Zheng L."/>
            <person name="Zheng X.H."/>
            <person name="Zhong F.N."/>
            <person name="Zhong W."/>
            <person name="Zhou X."/>
            <person name="Zhu S.C."/>
            <person name="Zhu X."/>
            <person name="Smith H.O."/>
            <person name="Gibbs R.A."/>
            <person name="Myers E.W."/>
            <person name="Rubin G.M."/>
            <person name="Venter J.C."/>
        </authorList>
    </citation>
    <scope>NUCLEOTIDE SEQUENCE [LARGE SCALE GENOMIC DNA]</scope>
    <source>
        <strain>Berkeley</strain>
    </source>
</reference>
<reference key="3">
    <citation type="journal article" date="2002" name="Genome Biol.">
        <title>Annotation of the Drosophila melanogaster euchromatic genome: a systematic review.</title>
        <authorList>
            <person name="Misra S."/>
            <person name="Crosby M.A."/>
            <person name="Mungall C.J."/>
            <person name="Matthews B.B."/>
            <person name="Campbell K.S."/>
            <person name="Hradecky P."/>
            <person name="Huang Y."/>
            <person name="Kaminker J.S."/>
            <person name="Millburn G.H."/>
            <person name="Prochnik S.E."/>
            <person name="Smith C.D."/>
            <person name="Tupy J.L."/>
            <person name="Whitfield E.J."/>
            <person name="Bayraktaroglu L."/>
            <person name="Berman B.P."/>
            <person name="Bettencourt B.R."/>
            <person name="Celniker S.E."/>
            <person name="de Grey A.D.N.J."/>
            <person name="Drysdale R.A."/>
            <person name="Harris N.L."/>
            <person name="Richter J."/>
            <person name="Russo S."/>
            <person name="Schroeder A.J."/>
            <person name="Shu S.Q."/>
            <person name="Stapleton M."/>
            <person name="Yamada C."/>
            <person name="Ashburner M."/>
            <person name="Gelbart W.M."/>
            <person name="Rubin G.M."/>
            <person name="Lewis S.E."/>
        </authorList>
    </citation>
    <scope>GENOME REANNOTATION</scope>
    <source>
        <strain>Berkeley</strain>
    </source>
</reference>
<reference key="4">
    <citation type="journal article" date="2002" name="Genome Biol.">
        <title>A Drosophila full-length cDNA resource.</title>
        <authorList>
            <person name="Stapleton M."/>
            <person name="Carlson J.W."/>
            <person name="Brokstein P."/>
            <person name="Yu C."/>
            <person name="Champe M."/>
            <person name="George R.A."/>
            <person name="Guarin H."/>
            <person name="Kronmiller B."/>
            <person name="Pacleb J.M."/>
            <person name="Park S."/>
            <person name="Wan K.H."/>
            <person name="Rubin G.M."/>
            <person name="Celniker S.E."/>
        </authorList>
    </citation>
    <scope>NUCLEOTIDE SEQUENCE [LARGE SCALE MRNA]</scope>
    <source>
        <strain>Berkeley</strain>
        <tissue>Embryo</tissue>
    </source>
</reference>
<reference key="5">
    <citation type="journal article" date="2007" name="Mol. Biosyst.">
        <title>An integrated chemical, mass spectrometric and computational strategy for (quantitative) phosphoproteomics: application to Drosophila melanogaster Kc167 cells.</title>
        <authorList>
            <person name="Bodenmiller B."/>
            <person name="Mueller L.N."/>
            <person name="Pedrioli P.G.A."/>
            <person name="Pflieger D."/>
            <person name="Juenger M.A."/>
            <person name="Eng J.K."/>
            <person name="Aebersold R."/>
            <person name="Tao W.A."/>
        </authorList>
    </citation>
    <scope>PHOSPHORYLATION [LARGE SCALE ANALYSIS] AT SER-1584</scope>
    <scope>IDENTIFICATION BY MASS SPECTROMETRY</scope>
</reference>
<reference key="6">
    <citation type="journal article" date="2008" name="J. Proteome Res.">
        <title>Phosphoproteome analysis of Drosophila melanogaster embryos.</title>
        <authorList>
            <person name="Zhai B."/>
            <person name="Villen J."/>
            <person name="Beausoleil S.A."/>
            <person name="Mintseris J."/>
            <person name="Gygi S.P."/>
        </authorList>
    </citation>
    <scope>PHOSPHORYLATION [LARGE SCALE ANALYSIS] AT THR-895</scope>
    <scope>IDENTIFICATION BY MASS SPECTROMETRY</scope>
    <source>
        <tissue>Embryo</tissue>
    </source>
</reference>
<proteinExistence type="evidence at protein level"/>